<name>UPAR_HUMAN</name>
<organism>
    <name type="scientific">Homo sapiens</name>
    <name type="common">Human</name>
    <dbReference type="NCBI Taxonomy" id="9606"/>
    <lineage>
        <taxon>Eukaryota</taxon>
        <taxon>Metazoa</taxon>
        <taxon>Chordata</taxon>
        <taxon>Craniata</taxon>
        <taxon>Vertebrata</taxon>
        <taxon>Euteleostomi</taxon>
        <taxon>Mammalia</taxon>
        <taxon>Eutheria</taxon>
        <taxon>Euarchontoglires</taxon>
        <taxon>Primates</taxon>
        <taxon>Haplorrhini</taxon>
        <taxon>Catarrhini</taxon>
        <taxon>Hominidae</taxon>
        <taxon>Homo</taxon>
    </lineage>
</organism>
<protein>
    <recommendedName>
        <fullName>Urokinase plasminogen activator surface receptor</fullName>
        <shortName>U-PAR</shortName>
        <shortName>uPAR</shortName>
    </recommendedName>
    <alternativeName>
        <fullName>Monocyte activation antigen Mo3</fullName>
    </alternativeName>
    <cdAntigenName>CD87</cdAntigenName>
</protein>
<feature type="signal peptide" evidence="10">
    <location>
        <begin position="1"/>
        <end position="22"/>
    </location>
</feature>
<feature type="chain" id="PRO_0000036090" description="Urokinase plasminogen activator surface receptor">
    <location>
        <begin position="23"/>
        <end position="305"/>
    </location>
</feature>
<feature type="propeptide" id="PRO_0000036091" description="Removed in mature form" evidence="2">
    <location>
        <begin position="306"/>
        <end position="335"/>
    </location>
</feature>
<feature type="domain" description="UPAR/Ly6 1">
    <location>
        <begin position="23"/>
        <end position="114"/>
    </location>
</feature>
<feature type="domain" description="UPAR/Ly6 2">
    <location>
        <begin position="115"/>
        <end position="213"/>
    </location>
</feature>
<feature type="domain" description="UPAR/Ly6 3">
    <location>
        <begin position="214"/>
        <end position="305"/>
    </location>
</feature>
<feature type="site" description="Cleavage; by U-PA">
    <location>
        <begin position="105"/>
        <end position="106"/>
    </location>
</feature>
<feature type="site" description="Cleavage; by U-PA">
    <location>
        <begin position="111"/>
        <end position="112"/>
    </location>
</feature>
<feature type="lipid moiety-binding region" description="GPI-anchor amidated glycine" evidence="2">
    <location>
        <position position="305"/>
    </location>
</feature>
<feature type="glycosylation site" description="N-linked (GlcNAc...) asparagine" evidence="8 9 12">
    <location>
        <position position="74"/>
    </location>
</feature>
<feature type="glycosylation site" description="N-linked (GlcNAc...) asparagine" evidence="8">
    <location>
        <position position="184"/>
    </location>
</feature>
<feature type="glycosylation site" description="N-linked (GlcNAc...) asparagine" evidence="8 9">
    <location>
        <position position="194"/>
    </location>
</feature>
<feature type="glycosylation site" description="N-linked (GlcNAc...) asparagine" evidence="12">
    <location>
        <position position="222"/>
    </location>
</feature>
<feature type="glycosylation site" description="N-linked (GlcNAc...) asparagine" evidence="8">
    <location>
        <position position="255"/>
    </location>
</feature>
<feature type="disulfide bond" evidence="8 9 12">
    <location>
        <begin position="25"/>
        <end position="46"/>
    </location>
</feature>
<feature type="disulfide bond" evidence="8 9 12">
    <location>
        <begin position="28"/>
        <end position="34"/>
    </location>
</feature>
<feature type="disulfide bond" evidence="8 9 12">
    <location>
        <begin position="39"/>
        <end position="67"/>
    </location>
</feature>
<feature type="disulfide bond" evidence="8 9 12">
    <location>
        <begin position="93"/>
        <end position="98"/>
    </location>
</feature>
<feature type="disulfide bond" evidence="8 9 12">
    <location>
        <begin position="117"/>
        <end position="144"/>
    </location>
</feature>
<feature type="disulfide bond" evidence="8 9 12">
    <location>
        <begin position="120"/>
        <end position="127"/>
    </location>
</feature>
<feature type="disulfide bond" evidence="8 9 12">
    <location>
        <begin position="137"/>
        <end position="169"/>
    </location>
</feature>
<feature type="disulfide bond" evidence="8 9 12">
    <location>
        <begin position="175"/>
        <end position="192"/>
    </location>
</feature>
<feature type="disulfide bond" evidence="8 9 12">
    <location>
        <begin position="193"/>
        <end position="198"/>
    </location>
</feature>
<feature type="disulfide bond" evidence="8 9 12">
    <location>
        <begin position="216"/>
        <end position="244"/>
    </location>
</feature>
<feature type="disulfide bond" evidence="8 9 12">
    <location>
        <begin position="219"/>
        <end position="227"/>
    </location>
</feature>
<feature type="disulfide bond" evidence="8 9 12">
    <location>
        <begin position="237"/>
        <end position="263"/>
    </location>
</feature>
<feature type="disulfide bond" evidence="8 9 12">
    <location>
        <begin position="269"/>
        <end position="287"/>
    </location>
</feature>
<feature type="disulfide bond" evidence="8 9 12">
    <location>
        <begin position="288"/>
        <end position="293"/>
    </location>
</feature>
<feature type="splice variant" id="VSP_046345" description="In isoform 3." evidence="15 16">
    <location>
        <begin position="158"/>
        <end position="202"/>
    </location>
</feature>
<feature type="splice variant" id="VSP_046346" description="In isoform 3." evidence="15 16">
    <original>I</original>
    <variation>V</variation>
    <location>
        <position position="203"/>
    </location>
</feature>
<feature type="splice variant" id="VSP_006715" description="In isoform 2." evidence="17 18">
    <original>PKNQSYMVRGCATASMCQHAHLGDAFSMNHIDVSCCTKSGCNHPDLDVQYRSGAAPQPGPAHLSLTITLLMTARLWGGTLLWT</original>
    <variation>RSLWGSWLPCKSTTALRPPCCEEAQATHV</variation>
    <location>
        <begin position="253"/>
        <end position="335"/>
    </location>
</feature>
<feature type="sequence variant" id="VAR_016322" description="In dbSNP:rs4251813." evidence="14">
    <original>E</original>
    <variation>G</variation>
    <location>
        <position position="55"/>
    </location>
</feature>
<feature type="sequence variant" id="VAR_016323" description="In dbSNP:rs399145." evidence="14">
    <original>T</original>
    <variation>A</variation>
    <location>
        <position position="86"/>
    </location>
</feature>
<feature type="sequence variant" id="VAR_016324" description="In dbSNP:rs4251878." evidence="14">
    <original>R</original>
    <variation>Q</variation>
    <location>
        <position position="105"/>
    </location>
</feature>
<feature type="sequence variant" id="VAR_016325" description="In dbSNP:rs2302524." evidence="14">
    <original>K</original>
    <variation>R</variation>
    <location>
        <position position="220"/>
    </location>
</feature>
<feature type="sequence variant" id="VAR_016326" description="In dbSNP:rs4251921." evidence="14">
    <original>N</original>
    <variation>K</variation>
    <location>
        <position position="281"/>
    </location>
</feature>
<feature type="sequence variant" id="VAR_052698" description="In dbSNP:rs16976608.">
    <original>D</original>
    <variation>A</variation>
    <location>
        <position position="297"/>
    </location>
</feature>
<feature type="sequence variant" id="VAR_014922" description="In dbSNP:rs4760." evidence="14">
    <original>L</original>
    <variation>P</variation>
    <location>
        <position position="317"/>
    </location>
</feature>
<feature type="sequence conflict" description="In Ref. 1; AA sequence." evidence="19" ref="1">
    <original>C</original>
    <variation>N</variation>
    <location>
        <position position="28"/>
    </location>
</feature>
<feature type="sequence conflict" description="In Ref. 13; AAK31795." evidence="19" ref="13">
    <original>H</original>
    <variation>P</variation>
    <location>
        <position position="165"/>
    </location>
</feature>
<feature type="sequence conflict" description="In Ref. 17; AA sequence." evidence="19" ref="17">
    <original>G</original>
    <variation>E</variation>
    <location>
        <position position="213"/>
    </location>
</feature>
<feature type="sequence conflict" description="In Ref. 12; AAF71751." evidence="19" ref="12">
    <original>G</original>
    <variation>D</variation>
    <location>
        <position position="249"/>
    </location>
</feature>
<feature type="sequence conflict" description="In Ref. 12; AAF71751." evidence="19" ref="12">
    <original>E</original>
    <variation>G</variation>
    <location>
        <position position="252"/>
    </location>
</feature>
<feature type="strand" evidence="20">
    <location>
        <begin position="24"/>
        <end position="28"/>
    </location>
</feature>
<feature type="strand" evidence="20">
    <location>
        <begin position="34"/>
        <end position="38"/>
    </location>
</feature>
<feature type="strand" evidence="20">
    <location>
        <begin position="45"/>
        <end position="54"/>
    </location>
</feature>
<feature type="strand" evidence="20">
    <location>
        <begin position="60"/>
        <end position="68"/>
    </location>
</feature>
<feature type="strand" evidence="20">
    <location>
        <begin position="75"/>
        <end position="81"/>
    </location>
</feature>
<feature type="strand" evidence="20">
    <location>
        <begin position="84"/>
        <end position="93"/>
    </location>
</feature>
<feature type="turn" evidence="20">
    <location>
        <begin position="96"/>
        <end position="99"/>
    </location>
</feature>
<feature type="strand" evidence="24">
    <location>
        <begin position="110"/>
        <end position="114"/>
    </location>
</feature>
<feature type="strand" evidence="20">
    <location>
        <begin position="116"/>
        <end position="121"/>
    </location>
</feature>
<feature type="turn" evidence="20">
    <location>
        <begin position="122"/>
        <end position="130"/>
    </location>
</feature>
<feature type="strand" evidence="20">
    <location>
        <begin position="133"/>
        <end position="136"/>
    </location>
</feature>
<feature type="strand" evidence="21">
    <location>
        <begin position="138"/>
        <end position="141"/>
    </location>
</feature>
<feature type="strand" evidence="20">
    <location>
        <begin position="143"/>
        <end position="150"/>
    </location>
</feature>
<feature type="strand" evidence="22">
    <location>
        <begin position="155"/>
        <end position="158"/>
    </location>
</feature>
<feature type="strand" evidence="20">
    <location>
        <begin position="164"/>
        <end position="171"/>
    </location>
</feature>
<feature type="strand" evidence="20">
    <location>
        <begin position="176"/>
        <end position="183"/>
    </location>
</feature>
<feature type="strand" evidence="20">
    <location>
        <begin position="186"/>
        <end position="193"/>
    </location>
</feature>
<feature type="turn" evidence="20">
    <location>
        <begin position="196"/>
        <end position="199"/>
    </location>
</feature>
<feature type="helix" evidence="20">
    <location>
        <begin position="206"/>
        <end position="208"/>
    </location>
</feature>
<feature type="strand" evidence="20">
    <location>
        <begin position="211"/>
        <end position="222"/>
    </location>
</feature>
<feature type="turn" evidence="20">
    <location>
        <begin position="223"/>
        <end position="225"/>
    </location>
</feature>
<feature type="strand" evidence="20">
    <location>
        <begin position="226"/>
        <end position="228"/>
    </location>
</feature>
<feature type="turn" evidence="20">
    <location>
        <begin position="229"/>
        <end position="231"/>
    </location>
</feature>
<feature type="strand" evidence="20">
    <location>
        <begin position="233"/>
        <end position="238"/>
    </location>
</feature>
<feature type="strand" evidence="20">
    <location>
        <begin position="243"/>
        <end position="251"/>
    </location>
</feature>
<feature type="turn" evidence="20">
    <location>
        <begin position="252"/>
        <end position="255"/>
    </location>
</feature>
<feature type="strand" evidence="20">
    <location>
        <begin position="256"/>
        <end position="264"/>
    </location>
</feature>
<feature type="helix" evidence="20">
    <location>
        <begin position="266"/>
        <end position="268"/>
    </location>
</feature>
<feature type="strand" evidence="22">
    <location>
        <begin position="270"/>
        <end position="273"/>
    </location>
</feature>
<feature type="helix" evidence="20">
    <location>
        <begin position="275"/>
        <end position="278"/>
    </location>
</feature>
<feature type="strand" evidence="20">
    <location>
        <begin position="284"/>
        <end position="288"/>
    </location>
</feature>
<feature type="turn" evidence="20">
    <location>
        <begin position="291"/>
        <end position="294"/>
    </location>
</feature>
<feature type="helix" evidence="23">
    <location>
        <begin position="296"/>
        <end position="298"/>
    </location>
</feature>
<feature type="sequence conflict" description="In Ref. 3; no nucleotide entry." evidence="19" ref="3">
    <original>V</original>
    <variation>I</variation>
    <location sequence="Q03405-3">
        <position position="158"/>
    </location>
</feature>
<evidence type="ECO:0000250" key="1">
    <source>
        <dbReference type="UniProtKB" id="P49616"/>
    </source>
</evidence>
<evidence type="ECO:0000255" key="2"/>
<evidence type="ECO:0000269" key="3">
    <source>
    </source>
</evidence>
<evidence type="ECO:0000269" key="4">
    <source>
    </source>
</evidence>
<evidence type="ECO:0000269" key="5">
    <source>
    </source>
</evidence>
<evidence type="ECO:0000269" key="6">
    <source>
    </source>
</evidence>
<evidence type="ECO:0000269" key="7">
    <source>
    </source>
</evidence>
<evidence type="ECO:0000269" key="8">
    <source>
    </source>
</evidence>
<evidence type="ECO:0000269" key="9">
    <source>
    </source>
</evidence>
<evidence type="ECO:0000269" key="10">
    <source>
    </source>
</evidence>
<evidence type="ECO:0000269" key="11">
    <source>
    </source>
</evidence>
<evidence type="ECO:0000269" key="12">
    <source>
    </source>
</evidence>
<evidence type="ECO:0000269" key="13">
    <source>
    </source>
</evidence>
<evidence type="ECO:0000269" key="14">
    <source ref="8"/>
</evidence>
<evidence type="ECO:0000303" key="15">
    <source>
    </source>
</evidence>
<evidence type="ECO:0000303" key="16">
    <source>
    </source>
</evidence>
<evidence type="ECO:0000303" key="17">
    <source>
    </source>
</evidence>
<evidence type="ECO:0000303" key="18">
    <source ref="7"/>
</evidence>
<evidence type="ECO:0000305" key="19"/>
<evidence type="ECO:0007829" key="20">
    <source>
        <dbReference type="PDB" id="2FD6"/>
    </source>
</evidence>
<evidence type="ECO:0007829" key="21">
    <source>
        <dbReference type="PDB" id="2I9B"/>
    </source>
</evidence>
<evidence type="ECO:0007829" key="22">
    <source>
        <dbReference type="PDB" id="3BT1"/>
    </source>
</evidence>
<evidence type="ECO:0007829" key="23">
    <source>
        <dbReference type="PDB" id="3U74"/>
    </source>
</evidence>
<evidence type="ECO:0007829" key="24">
    <source>
        <dbReference type="PDB" id="7E17"/>
    </source>
</evidence>
<sequence>MGHPPLLPLLLLLHTCVPASWGLRCMQCKTNGDCRVEECALGQDLCRTTIVRLWEEGEELELVEKSCTHSEKTNRTLSYRTGLKITSLTEVVCGLDLCNQGNSGRAVTYSRSRYLECISCGSSDMSCERGRHQSLQCRSPEEQCLDVVTHWIQEGEEGRPKDDRHLRGCGYLPGCPGSNGFHNNDTFHFLKCCNTTKCNEGPILELENLPQNGRQCYSCKGNSTHGCSSEETFLIDCRGPMNQCLVATGTHEPKNQSYMVRGCATASMCQHAHLGDAFSMNHIDVSCCTKSGCNHPDLDVQYRSGAAPQPGPAHLSLTITLLMTARLWGGTLLWT</sequence>
<comment type="function">
    <text evidence="7">Acts as a receptor for urokinase plasminogen activator (PubMed:15677461). Plays a role in localizing and promoting plasmin formation. Mediates the proteolysis-independent signal transduction activation effects of U-PA. It is subject to negative-feedback regulation by U-PA which cleaves it into an inactive form.</text>
</comment>
<comment type="subunit">
    <text evidence="3 4 5 6 7 8 9 11 12 13 19">Monomer (Probable). Interacts with MRC2. Interacts (via the UPAR/Ly6 domains) with SRPX2. Interacts with FAP (seprase); the interaction occurs at the cell surface of invadopodia membrane. Interacts with SORL1 (via N-terminal ectodomain); this interaction decreases PLAUR internalization (PubMed:14764453, PubMed:23486467). The ternary complex composed of PLAUR-PLAU-SERPINE1 also interacts with SORL1 (PubMed:15053742). Interacts with CD82; this interaction prevents PLAUR from binding to its high affinity ligand PLAU (PubMed:15677461).</text>
</comment>
<comment type="interaction">
    <interactant intactId="EBI-716505">
        <id>Q03405</id>
    </interactant>
    <interactant intactId="EBI-525291">
        <id>P03950</id>
        <label>ANG</label>
    </interactant>
    <organismsDiffer>false</organismsDiffer>
    <experiments>5</experiments>
</comment>
<comment type="interaction">
    <interactant intactId="EBI-15695188">
        <id>Q03405-1</id>
    </interactant>
    <interactant intactId="EBI-3905042">
        <id>P00749</id>
        <label>PLAU</label>
    </interactant>
    <organismsDiffer>false</organismsDiffer>
    <experiments>2</experiments>
</comment>
<comment type="interaction">
    <interactant intactId="EBI-11028203">
        <id>Q03405-2</id>
    </interactant>
    <interactant intactId="EBI-946046">
        <id>P54252</id>
        <label>ATXN3</label>
    </interactant>
    <organismsDiffer>false</organismsDiffer>
    <experiments>3</experiments>
</comment>
<comment type="interaction">
    <interactant intactId="EBI-11028203">
        <id>Q03405-2</id>
    </interactant>
    <interactant intactId="EBI-351506">
        <id>P06396</id>
        <label>GSN</label>
    </interactant>
    <organismsDiffer>false</organismsDiffer>
    <experiments>3</experiments>
</comment>
<comment type="interaction">
    <interactant intactId="EBI-11028203">
        <id>Q03405-2</id>
    </interactant>
    <interactant intactId="EBI-50433196">
        <id>A0A6Q8PF08</id>
        <label>PMP22</label>
    </interactant>
    <organismsDiffer>false</organismsDiffer>
    <experiments>3</experiments>
</comment>
<comment type="interaction">
    <interactant intactId="EBI-11028203">
        <id>Q03405-2</id>
    </interactant>
    <interactant intactId="EBI-5235340">
        <id>Q7Z699</id>
        <label>SPRED1</label>
    </interactant>
    <organismsDiffer>false</organismsDiffer>
    <experiments>3</experiments>
</comment>
<comment type="subcellular location">
    <subcellularLocation>
        <location evidence="4">Cell membrane</location>
    </subcellularLocation>
    <subcellularLocation>
        <location evidence="4">Cell projection</location>
        <location evidence="4">Invadopodium membrane</location>
    </subcellularLocation>
    <text evidence="4">Colocalized with FAP (seprase) preferentially at the cell surface of invadopodia membrane in a cytoskeleton-, integrin- and vitronectin-dependent manner.</text>
</comment>
<comment type="subcellular location">
    <molecule>Isoform 1</molecule>
    <subcellularLocation>
        <location evidence="7">Cell membrane</location>
        <topology evidence="1">Lipid-anchor</topology>
        <topology evidence="1">GPI-anchor</topology>
    </subcellularLocation>
</comment>
<comment type="subcellular location">
    <molecule>Isoform 2</molecule>
    <subcellularLocation>
        <location evidence="1">Secreted</location>
    </subcellularLocation>
</comment>
<comment type="alternative products">
    <event type="alternative splicing"/>
    <isoform>
        <id>Q03405-1</id>
        <name>1</name>
        <name>uPAR1</name>
        <name>GPI-anchored</name>
        <sequence type="displayed"/>
    </isoform>
    <isoform>
        <id>Q03405-2</id>
        <name>2</name>
        <name>uPAR2</name>
        <name>Secreted</name>
        <sequence type="described" ref="VSP_006715"/>
    </isoform>
    <isoform>
        <id>Q03405-3</id>
        <name>3</name>
        <sequence type="described" ref="VSP_046345 VSP_046346"/>
    </isoform>
</comment>
<comment type="tissue specificity">
    <text>Expressed in neurons of the rolandic area of the brain (at protein level). Expressed in the brain.</text>
</comment>
<comment type="online information" name="Atlas of Genetics and Cytogenetics in Oncology and Haematology">
    <link uri="https://atlasgeneticsoncology.org/gene/41741/PLAUR"/>
</comment>
<dbReference type="EMBL" id="X51675">
    <property type="protein sequence ID" value="CAA35981.1"/>
    <property type="molecule type" value="mRNA"/>
</dbReference>
<dbReference type="EMBL" id="M83246">
    <property type="protein sequence ID" value="AAA59862.1"/>
    <property type="molecule type" value="mRNA"/>
</dbReference>
<dbReference type="EMBL" id="X74039">
    <property type="protein sequence ID" value="CAA52191.1"/>
    <property type="molecule type" value="mRNA"/>
</dbReference>
<dbReference type="EMBL" id="U09346">
    <property type="protein sequence ID" value="AAA17979.1"/>
    <property type="molecule type" value="Genomic_DNA"/>
</dbReference>
<dbReference type="EMBL" id="U09347">
    <property type="protein sequence ID" value="AAA17978.1"/>
    <property type="molecule type" value="mRNA"/>
</dbReference>
<dbReference type="EMBL" id="U08839">
    <property type="protein sequence ID" value="AAB60333.1"/>
    <property type="molecule type" value="mRNA"/>
</dbReference>
<dbReference type="EMBL" id="U09937">
    <property type="protein sequence ID" value="AAB60690.1"/>
    <property type="molecule type" value="Genomic_DNA"/>
</dbReference>
<dbReference type="EMBL" id="U09931">
    <property type="protein sequence ID" value="AAB60690.1"/>
    <property type="status" value="JOINED"/>
    <property type="molecule type" value="Genomic_DNA"/>
</dbReference>
<dbReference type="EMBL" id="U09932">
    <property type="protein sequence ID" value="AAB60690.1"/>
    <property type="status" value="JOINED"/>
    <property type="molecule type" value="Genomic_DNA"/>
</dbReference>
<dbReference type="EMBL" id="U09933">
    <property type="protein sequence ID" value="AAB60690.1"/>
    <property type="status" value="JOINED"/>
    <property type="molecule type" value="Genomic_DNA"/>
</dbReference>
<dbReference type="EMBL" id="U09935">
    <property type="protein sequence ID" value="AAB60690.1"/>
    <property type="status" value="JOINED"/>
    <property type="molecule type" value="Genomic_DNA"/>
</dbReference>
<dbReference type="EMBL" id="U09936">
    <property type="protein sequence ID" value="AAB60690.1"/>
    <property type="status" value="JOINED"/>
    <property type="molecule type" value="Genomic_DNA"/>
</dbReference>
<dbReference type="EMBL" id="AY194849">
    <property type="protein sequence ID" value="AAN86351.1"/>
    <property type="molecule type" value="Genomic_DNA"/>
</dbReference>
<dbReference type="EMBL" id="AK290774">
    <property type="protein sequence ID" value="BAF83463.1"/>
    <property type="molecule type" value="mRNA"/>
</dbReference>
<dbReference type="EMBL" id="CR456952">
    <property type="protein sequence ID" value="CAG33233.1"/>
    <property type="molecule type" value="mRNA"/>
</dbReference>
<dbReference type="EMBL" id="AC005525">
    <property type="protein sequence ID" value="AAC32739.1"/>
    <property type="molecule type" value="Genomic_DNA"/>
</dbReference>
<dbReference type="EMBL" id="AC006953">
    <property type="protein sequence ID" value="AAD17387.1"/>
    <property type="molecule type" value="Genomic_DNA"/>
</dbReference>
<dbReference type="EMBL" id="AC006953">
    <property type="protein sequence ID" value="AAD17388.1"/>
    <property type="molecule type" value="Genomic_DNA"/>
</dbReference>
<dbReference type="EMBL" id="CH471126">
    <property type="protein sequence ID" value="EAW57220.1"/>
    <property type="molecule type" value="Genomic_DNA"/>
</dbReference>
<dbReference type="EMBL" id="BC002788">
    <property type="protein sequence ID" value="AAH02788.1"/>
    <property type="molecule type" value="mRNA"/>
</dbReference>
<dbReference type="EMBL" id="AF257789">
    <property type="protein sequence ID" value="AAF71751.1"/>
    <property type="molecule type" value="mRNA"/>
</dbReference>
<dbReference type="EMBL" id="AY029180">
    <property type="protein sequence ID" value="AAK31795.1"/>
    <property type="molecule type" value="mRNA"/>
</dbReference>
<dbReference type="EMBL" id="S78532">
    <property type="protein sequence ID" value="AAD14289.1"/>
    <property type="molecule type" value="Genomic_DNA"/>
</dbReference>
<dbReference type="CCDS" id="CCDS12628.1">
    <molecule id="Q03405-1"/>
</dbReference>
<dbReference type="CCDS" id="CCDS33041.1">
    <molecule id="Q03405-2"/>
</dbReference>
<dbReference type="CCDS" id="CCDS33042.1">
    <molecule id="Q03405-3"/>
</dbReference>
<dbReference type="PIR" id="I52614">
    <property type="entry name" value="I52614"/>
</dbReference>
<dbReference type="PIR" id="S12376">
    <property type="entry name" value="A39743"/>
</dbReference>
<dbReference type="PIR" id="S39495">
    <property type="entry name" value="S39495"/>
</dbReference>
<dbReference type="RefSeq" id="NP_001005376.1">
    <molecule id="Q03405-2"/>
    <property type="nucleotide sequence ID" value="NM_001005376.3"/>
</dbReference>
<dbReference type="RefSeq" id="NP_001005377.1">
    <molecule id="Q03405-3"/>
    <property type="nucleotide sequence ID" value="NM_001005377.3"/>
</dbReference>
<dbReference type="RefSeq" id="NP_001287966.1">
    <property type="nucleotide sequence ID" value="NM_001301037.1"/>
</dbReference>
<dbReference type="RefSeq" id="NP_002650.1">
    <molecule id="Q03405-1"/>
    <property type="nucleotide sequence ID" value="NM_002659.4"/>
</dbReference>
<dbReference type="RefSeq" id="XP_047294881.1">
    <molecule id="Q03405-1"/>
    <property type="nucleotide sequence ID" value="XM_047438925.1"/>
</dbReference>
<dbReference type="RefSeq" id="XP_047294882.1">
    <molecule id="Q03405-3"/>
    <property type="nucleotide sequence ID" value="XM_047438926.1"/>
</dbReference>
<dbReference type="RefSeq" id="XP_054177180.1">
    <molecule id="Q03405-1"/>
    <property type="nucleotide sequence ID" value="XM_054321205.1"/>
</dbReference>
<dbReference type="RefSeq" id="XP_054177182.1">
    <molecule id="Q03405-3"/>
    <property type="nucleotide sequence ID" value="XM_054321207.1"/>
</dbReference>
<dbReference type="PDB" id="1YWH">
    <property type="method" value="X-ray"/>
    <property type="resolution" value="2.70 A"/>
    <property type="chains" value="A/C/E/G/I/K/M/O=23-335"/>
</dbReference>
<dbReference type="PDB" id="2FD6">
    <property type="method" value="X-ray"/>
    <property type="resolution" value="1.90 A"/>
    <property type="chains" value="U=23-297"/>
</dbReference>
<dbReference type="PDB" id="2I9B">
    <property type="method" value="X-ray"/>
    <property type="resolution" value="2.80 A"/>
    <property type="chains" value="E/F/G/H=23-299"/>
</dbReference>
<dbReference type="PDB" id="3BT1">
    <property type="method" value="X-ray"/>
    <property type="resolution" value="2.80 A"/>
    <property type="chains" value="U=23-303"/>
</dbReference>
<dbReference type="PDB" id="3BT2">
    <property type="method" value="X-ray"/>
    <property type="resolution" value="2.50 A"/>
    <property type="chains" value="U=23-303"/>
</dbReference>
<dbReference type="PDB" id="3U73">
    <property type="method" value="X-ray"/>
    <property type="resolution" value="3.19 A"/>
    <property type="chains" value="U=23-305"/>
</dbReference>
<dbReference type="PDB" id="3U74">
    <property type="method" value="X-ray"/>
    <property type="resolution" value="2.39 A"/>
    <property type="chains" value="U=23-305"/>
</dbReference>
<dbReference type="PDB" id="4K24">
    <property type="method" value="X-ray"/>
    <property type="resolution" value="4.50 A"/>
    <property type="chains" value="U=23-303"/>
</dbReference>
<dbReference type="PDB" id="4QTI">
    <property type="method" value="X-ray"/>
    <property type="resolution" value="3.00 A"/>
    <property type="chains" value="U=23-305"/>
</dbReference>
<dbReference type="PDB" id="7E17">
    <property type="method" value="X-ray"/>
    <property type="resolution" value="2.96 A"/>
    <property type="chains" value="A/B=23-299"/>
</dbReference>
<dbReference type="PDB" id="7V63">
    <property type="method" value="X-ray"/>
    <property type="resolution" value="2.91 A"/>
    <property type="chains" value="A/B=23-299"/>
</dbReference>
<dbReference type="PDBsum" id="1YWH"/>
<dbReference type="PDBsum" id="2FD6"/>
<dbReference type="PDBsum" id="2I9B"/>
<dbReference type="PDBsum" id="3BT1"/>
<dbReference type="PDBsum" id="3BT2"/>
<dbReference type="PDBsum" id="3U73"/>
<dbReference type="PDBsum" id="3U74"/>
<dbReference type="PDBsum" id="4K24"/>
<dbReference type="PDBsum" id="4QTI"/>
<dbReference type="PDBsum" id="7E17"/>
<dbReference type="PDBsum" id="7V63"/>
<dbReference type="SASBDB" id="Q03405"/>
<dbReference type="SMR" id="Q03405"/>
<dbReference type="BioGRID" id="111345">
    <property type="interactions" value="133"/>
</dbReference>
<dbReference type="ComplexPortal" id="CPX-487">
    <property type="entry name" value="uPA-uPAR complex"/>
</dbReference>
<dbReference type="ComplexPortal" id="CPX-501">
    <property type="entry name" value="uPA-uPAR-vitronectin complex"/>
</dbReference>
<dbReference type="CORUM" id="Q03405"/>
<dbReference type="DIP" id="DIP-137N"/>
<dbReference type="FunCoup" id="Q03405">
    <property type="interactions" value="240"/>
</dbReference>
<dbReference type="IntAct" id="Q03405">
    <property type="interactions" value="85"/>
</dbReference>
<dbReference type="STRING" id="9606.ENSP00000339328"/>
<dbReference type="BindingDB" id="Q03405"/>
<dbReference type="ChEMBL" id="CHEMBL4883"/>
<dbReference type="DrugBank" id="DB06245">
    <property type="generic name" value="Lanoteplase"/>
</dbReference>
<dbReference type="DrugBank" id="DB08877">
    <property type="generic name" value="Ruxolitinib"/>
</dbReference>
<dbReference type="DrugBank" id="DB00013">
    <property type="generic name" value="Urokinase"/>
</dbReference>
<dbReference type="DrugBank" id="DB05476">
    <property type="generic name" value="WX-UK1"/>
</dbReference>
<dbReference type="GlyCosmos" id="Q03405">
    <property type="glycosylation" value="5 sites, No reported glycans"/>
</dbReference>
<dbReference type="GlyGen" id="Q03405">
    <property type="glycosylation" value="6 sites, 2 N-linked glycans (3 sites), 1 O-linked glycan (1 site)"/>
</dbReference>
<dbReference type="iPTMnet" id="Q03405"/>
<dbReference type="PhosphoSitePlus" id="Q03405"/>
<dbReference type="SwissPalm" id="Q03405"/>
<dbReference type="BioMuta" id="PLAUR"/>
<dbReference type="DMDM" id="465003"/>
<dbReference type="jPOST" id="Q03405"/>
<dbReference type="MassIVE" id="Q03405"/>
<dbReference type="PaxDb" id="9606-ENSP00000339328"/>
<dbReference type="PeptideAtlas" id="Q03405"/>
<dbReference type="ProteomicsDB" id="58208">
    <molecule id="Q03405-1"/>
</dbReference>
<dbReference type="ProteomicsDB" id="58209">
    <molecule id="Q03405-2"/>
</dbReference>
<dbReference type="ProteomicsDB" id="58210">
    <molecule id="Q03405-3"/>
</dbReference>
<dbReference type="Pumba" id="Q03405"/>
<dbReference type="ABCD" id="Q03405">
    <property type="antibodies" value="18 sequenced antibodies"/>
</dbReference>
<dbReference type="Antibodypedia" id="31096">
    <property type="antibodies" value="663 antibodies from 42 providers"/>
</dbReference>
<dbReference type="DNASU" id="5329"/>
<dbReference type="Ensembl" id="ENST00000221264.8">
    <molecule id="Q03405-3"/>
    <property type="protein sequence ID" value="ENSP00000221264.3"/>
    <property type="gene ID" value="ENSG00000011422.12"/>
</dbReference>
<dbReference type="Ensembl" id="ENST00000339082.7">
    <molecule id="Q03405-2"/>
    <property type="protein sequence ID" value="ENSP00000342049.2"/>
    <property type="gene ID" value="ENSG00000011422.12"/>
</dbReference>
<dbReference type="Ensembl" id="ENST00000340093.8">
    <molecule id="Q03405-1"/>
    <property type="protein sequence ID" value="ENSP00000339328.3"/>
    <property type="gene ID" value="ENSG00000011422.12"/>
</dbReference>
<dbReference type="GeneID" id="5329"/>
<dbReference type="KEGG" id="hsa:5329"/>
<dbReference type="MANE-Select" id="ENST00000340093.8">
    <property type="protein sequence ID" value="ENSP00000339328.3"/>
    <property type="RefSeq nucleotide sequence ID" value="NM_002659.4"/>
    <property type="RefSeq protein sequence ID" value="NP_002650.1"/>
</dbReference>
<dbReference type="UCSC" id="uc002oxd.3">
    <molecule id="Q03405-1"/>
    <property type="organism name" value="human"/>
</dbReference>
<dbReference type="AGR" id="HGNC:9053"/>
<dbReference type="CTD" id="5329"/>
<dbReference type="DisGeNET" id="5329"/>
<dbReference type="GeneCards" id="PLAUR"/>
<dbReference type="HGNC" id="HGNC:9053">
    <property type="gene designation" value="PLAUR"/>
</dbReference>
<dbReference type="HPA" id="ENSG00000011422">
    <property type="expression patterns" value="Tissue enriched (bone)"/>
</dbReference>
<dbReference type="MIM" id="173391">
    <property type="type" value="gene"/>
</dbReference>
<dbReference type="neXtProt" id="NX_Q03405"/>
<dbReference type="OpenTargets" id="ENSG00000011422"/>
<dbReference type="PharmGKB" id="PA33383"/>
<dbReference type="VEuPathDB" id="HostDB:ENSG00000011422"/>
<dbReference type="eggNOG" id="ENOG502S36D">
    <property type="taxonomic scope" value="Eukaryota"/>
</dbReference>
<dbReference type="GeneTree" id="ENSGT00940000153599"/>
<dbReference type="HOGENOM" id="CLU_072612_0_0_1"/>
<dbReference type="InParanoid" id="Q03405"/>
<dbReference type="OMA" id="TGNGCNH"/>
<dbReference type="OrthoDB" id="5945173at2759"/>
<dbReference type="PAN-GO" id="Q03405">
    <property type="GO annotations" value="1 GO annotation based on evolutionary models"/>
</dbReference>
<dbReference type="PhylomeDB" id="Q03405"/>
<dbReference type="TreeFam" id="TF338662"/>
<dbReference type="PathwayCommons" id="Q03405"/>
<dbReference type="Reactome" id="R-HSA-162791">
    <property type="pathway name" value="Attachment of GPI anchor to uPAR"/>
</dbReference>
<dbReference type="Reactome" id="R-HSA-6798695">
    <property type="pathway name" value="Neutrophil degranulation"/>
</dbReference>
<dbReference type="Reactome" id="R-HSA-75205">
    <property type="pathway name" value="Dissolution of Fibrin Clot"/>
</dbReference>
<dbReference type="SignaLink" id="Q03405"/>
<dbReference type="SIGNOR" id="Q03405"/>
<dbReference type="BioGRID-ORCS" id="5329">
    <property type="hits" value="12 hits in 1170 CRISPR screens"/>
</dbReference>
<dbReference type="ChiTaRS" id="PLAUR">
    <property type="organism name" value="human"/>
</dbReference>
<dbReference type="EvolutionaryTrace" id="Q03405"/>
<dbReference type="GeneWiki" id="Urokinase_receptor"/>
<dbReference type="GenomeRNAi" id="5329"/>
<dbReference type="Pharos" id="Q03405">
    <property type="development level" value="Tchem"/>
</dbReference>
<dbReference type="PRO" id="PR:Q03405"/>
<dbReference type="Proteomes" id="UP000005640">
    <property type="component" value="Chromosome 19"/>
</dbReference>
<dbReference type="RNAct" id="Q03405">
    <property type="molecule type" value="protein"/>
</dbReference>
<dbReference type="Bgee" id="ENSG00000011422">
    <property type="expression patterns" value="Expressed in periodontal ligament and 192 other cell types or tissues"/>
</dbReference>
<dbReference type="ExpressionAtlas" id="Q03405">
    <property type="expression patterns" value="baseline and differential"/>
</dbReference>
<dbReference type="GO" id="GO:0042995">
    <property type="term" value="C:cell projection"/>
    <property type="evidence" value="ECO:0007669"/>
    <property type="project" value="UniProtKB-SubCell"/>
</dbReference>
<dbReference type="GO" id="GO:0009986">
    <property type="term" value="C:cell surface"/>
    <property type="evidence" value="ECO:0000314"/>
    <property type="project" value="CAFA"/>
</dbReference>
<dbReference type="GO" id="GO:0005788">
    <property type="term" value="C:endoplasmic reticulum lumen"/>
    <property type="evidence" value="ECO:0000304"/>
    <property type="project" value="Reactome"/>
</dbReference>
<dbReference type="GO" id="GO:0005789">
    <property type="term" value="C:endoplasmic reticulum membrane"/>
    <property type="evidence" value="ECO:0000304"/>
    <property type="project" value="Reactome"/>
</dbReference>
<dbReference type="GO" id="GO:0009897">
    <property type="term" value="C:external side of plasma membrane"/>
    <property type="evidence" value="ECO:0000303"/>
    <property type="project" value="ComplexPortal"/>
</dbReference>
<dbReference type="GO" id="GO:0005576">
    <property type="term" value="C:extracellular region"/>
    <property type="evidence" value="ECO:0007669"/>
    <property type="project" value="UniProtKB-SubCell"/>
</dbReference>
<dbReference type="GO" id="GO:0019898">
    <property type="term" value="C:extrinsic component of membrane"/>
    <property type="evidence" value="ECO:0000304"/>
    <property type="project" value="ProtInc"/>
</dbReference>
<dbReference type="GO" id="GO:0005925">
    <property type="term" value="C:focal adhesion"/>
    <property type="evidence" value="ECO:0007005"/>
    <property type="project" value="UniProtKB"/>
</dbReference>
<dbReference type="GO" id="GO:0016020">
    <property type="term" value="C:membrane"/>
    <property type="evidence" value="ECO:0000303"/>
    <property type="project" value="UniProtKB"/>
</dbReference>
<dbReference type="GO" id="GO:0005886">
    <property type="term" value="C:plasma membrane"/>
    <property type="evidence" value="ECO:0000314"/>
    <property type="project" value="AgBase"/>
</dbReference>
<dbReference type="GO" id="GO:0098637">
    <property type="term" value="C:protein complex involved in cell-matrix adhesion"/>
    <property type="evidence" value="ECO:0000353"/>
    <property type="project" value="ComplexPortal"/>
</dbReference>
<dbReference type="GO" id="GO:1905370">
    <property type="term" value="C:serine-type endopeptidase complex"/>
    <property type="evidence" value="ECO:0000353"/>
    <property type="project" value="ComplexPortal"/>
</dbReference>
<dbReference type="GO" id="GO:0035579">
    <property type="term" value="C:specific granule membrane"/>
    <property type="evidence" value="ECO:0000304"/>
    <property type="project" value="Reactome"/>
</dbReference>
<dbReference type="GO" id="GO:0019899">
    <property type="term" value="F:enzyme binding"/>
    <property type="evidence" value="ECO:0000353"/>
    <property type="project" value="UniProtKB"/>
</dbReference>
<dbReference type="GO" id="GO:0019904">
    <property type="term" value="F:protein domain specific binding"/>
    <property type="evidence" value="ECO:0000353"/>
    <property type="project" value="AgBase"/>
</dbReference>
<dbReference type="GO" id="GO:0038023">
    <property type="term" value="F:signaling receptor activity"/>
    <property type="evidence" value="ECO:0000304"/>
    <property type="project" value="ProtInc"/>
</dbReference>
<dbReference type="GO" id="GO:0005102">
    <property type="term" value="F:signaling receptor binding"/>
    <property type="evidence" value="ECO:0000353"/>
    <property type="project" value="AgBase"/>
</dbReference>
<dbReference type="GO" id="GO:0030377">
    <property type="term" value="F:urokinase plasminogen activator receptor activity"/>
    <property type="evidence" value="ECO:0000303"/>
    <property type="project" value="UniProtKB"/>
</dbReference>
<dbReference type="GO" id="GO:0007596">
    <property type="term" value="P:blood coagulation"/>
    <property type="evidence" value="ECO:0000304"/>
    <property type="project" value="ProtInc"/>
</dbReference>
<dbReference type="GO" id="GO:0006935">
    <property type="term" value="P:chemotaxis"/>
    <property type="evidence" value="ECO:0000304"/>
    <property type="project" value="ProtInc"/>
</dbReference>
<dbReference type="GO" id="GO:0043066">
    <property type="term" value="P:negative regulation of apoptotic process"/>
    <property type="evidence" value="ECO:0000315"/>
    <property type="project" value="CACAO"/>
</dbReference>
<dbReference type="GO" id="GO:2001243">
    <property type="term" value="P:negative regulation of intrinsic apoptotic signaling pathway"/>
    <property type="evidence" value="ECO:0000315"/>
    <property type="project" value="CACAO"/>
</dbReference>
<dbReference type="GO" id="GO:0043388">
    <property type="term" value="P:positive regulation of DNA binding"/>
    <property type="evidence" value="ECO:0000314"/>
    <property type="project" value="CACAO"/>
</dbReference>
<dbReference type="GO" id="GO:0045742">
    <property type="term" value="P:positive regulation of epidermal growth factor receptor signaling pathway"/>
    <property type="evidence" value="ECO:0000315"/>
    <property type="project" value="CACAO"/>
</dbReference>
<dbReference type="GO" id="GO:0034112">
    <property type="term" value="P:positive regulation of homotypic cell-cell adhesion"/>
    <property type="evidence" value="ECO:0000315"/>
    <property type="project" value="ARUK-UCL"/>
</dbReference>
<dbReference type="GO" id="GO:0001934">
    <property type="term" value="P:positive regulation of protein phosphorylation"/>
    <property type="evidence" value="ECO:0000315"/>
    <property type="project" value="CACAO"/>
</dbReference>
<dbReference type="GO" id="GO:0090200">
    <property type="term" value="P:positive regulation of release of cytochrome c from mitochondria"/>
    <property type="evidence" value="ECO:0000315"/>
    <property type="project" value="CACAO"/>
</dbReference>
<dbReference type="GO" id="GO:0030155">
    <property type="term" value="P:regulation of cell adhesion"/>
    <property type="evidence" value="ECO:0000314"/>
    <property type="project" value="ComplexPortal"/>
</dbReference>
<dbReference type="GO" id="GO:0051917">
    <property type="term" value="P:regulation of fibrinolysis"/>
    <property type="evidence" value="ECO:0000303"/>
    <property type="project" value="ComplexPortal"/>
</dbReference>
<dbReference type="GO" id="GO:0010755">
    <property type="term" value="P:regulation of plasminogen activation"/>
    <property type="evidence" value="ECO:0000303"/>
    <property type="project" value="ComplexPortal"/>
</dbReference>
<dbReference type="GO" id="GO:0030162">
    <property type="term" value="P:regulation of proteolysis"/>
    <property type="evidence" value="ECO:0000303"/>
    <property type="project" value="UniProtKB"/>
</dbReference>
<dbReference type="GO" id="GO:0007165">
    <property type="term" value="P:signal transduction"/>
    <property type="evidence" value="ECO:0000304"/>
    <property type="project" value="ProtInc"/>
</dbReference>
<dbReference type="GO" id="GO:0038195">
    <property type="term" value="P:urokinase plasminogen activator signaling pathway"/>
    <property type="evidence" value="ECO:0000303"/>
    <property type="project" value="ComplexPortal"/>
</dbReference>
<dbReference type="CDD" id="cd23556">
    <property type="entry name" value="TFP_LU_ECD_uPAR_rpt1"/>
    <property type="match status" value="1"/>
</dbReference>
<dbReference type="CDD" id="cd23557">
    <property type="entry name" value="TFP_LU_ECD_uPAR_rpt2"/>
    <property type="match status" value="1"/>
</dbReference>
<dbReference type="CDD" id="cd23558">
    <property type="entry name" value="TFP_LU_ECD_uPAR_rpt3"/>
    <property type="match status" value="1"/>
</dbReference>
<dbReference type="FunFam" id="2.10.60.10:FF:000013">
    <property type="entry name" value="Urokinase plasminogen activator surface receptor"/>
    <property type="match status" value="1"/>
</dbReference>
<dbReference type="FunFam" id="2.10.60.10:FF:000015">
    <property type="entry name" value="Urokinase plasminogen activator surface receptor"/>
    <property type="match status" value="1"/>
</dbReference>
<dbReference type="FunFam" id="2.10.60.10:FF:000019">
    <property type="entry name" value="Urokinase plasminogen activator surface receptor"/>
    <property type="match status" value="1"/>
</dbReference>
<dbReference type="Gene3D" id="2.10.60.10">
    <property type="entry name" value="CD59"/>
    <property type="match status" value="3"/>
</dbReference>
<dbReference type="InterPro" id="IPR018363">
    <property type="entry name" value="CD59_antigen_CS"/>
</dbReference>
<dbReference type="InterPro" id="IPR016054">
    <property type="entry name" value="LY6_UPA_recep-like"/>
</dbReference>
<dbReference type="InterPro" id="IPR045860">
    <property type="entry name" value="Snake_toxin-like_sf"/>
</dbReference>
<dbReference type="PANTHER" id="PTHR10624:SF6">
    <property type="entry name" value="UROKINASE PLASMINOGEN ACTIVATOR SURFACE RECEPTOR"/>
    <property type="match status" value="1"/>
</dbReference>
<dbReference type="PANTHER" id="PTHR10624">
    <property type="entry name" value="UROKINASE PLASMINOGEN ACTIVATOR SURFACE RECEPTOR-RELATED"/>
    <property type="match status" value="1"/>
</dbReference>
<dbReference type="Pfam" id="PF00021">
    <property type="entry name" value="UPAR_LY6"/>
    <property type="match status" value="3"/>
</dbReference>
<dbReference type="SMART" id="SM00134">
    <property type="entry name" value="LU"/>
    <property type="match status" value="3"/>
</dbReference>
<dbReference type="SUPFAM" id="SSF57302">
    <property type="entry name" value="Snake toxin-like"/>
    <property type="match status" value="3"/>
</dbReference>
<dbReference type="PROSITE" id="PS00983">
    <property type="entry name" value="LY6_UPAR"/>
    <property type="match status" value="3"/>
</dbReference>
<reference key="1">
    <citation type="journal article" date="1990" name="EMBO J.">
        <title>Cloning and expression of the receptor for human urokinase plasminogen activator, a central molecule in cell surface, plasmin dependent proteolysis.</title>
        <authorList>
            <person name="Roldan A.L."/>
            <person name="Cubellis M.V."/>
            <person name="Masucci M.T."/>
            <person name="Behrendt N."/>
            <person name="Lund L.R."/>
            <person name="Danoe K."/>
            <person name="Appella E."/>
            <person name="Blasi F."/>
        </authorList>
    </citation>
    <scope>NUCLEOTIDE SEQUENCE [MRNA] (ISOFORM 1)</scope>
    <scope>PROTEIN SEQUENCE OF 23-33</scope>
</reference>
<reference key="2">
    <citation type="journal article" date="1992" name="J. Immunol.">
        <title>cDNA for Mo3, a monocyte activation antigen, encodes the human receptor for urokinase plasminogen activator.</title>
        <authorList>
            <person name="Min H.Y."/>
            <person name="Semnani R."/>
            <person name="Mizukami I.F."/>
            <person name="Watt K."/>
            <person name="Todd R.F. III"/>
            <person name="Liu D.Y."/>
        </authorList>
    </citation>
    <scope>NUCLEOTIDE SEQUENCE [MRNA] (ISOFORM 1)</scope>
</reference>
<reference key="3">
    <citation type="journal article" date="1993" name="Biochem. Soc. Trans.">
        <title>A novel urokinase receptor on monocyte-like macrophage cell line.</title>
        <authorList>
            <person name="Bayraktutan U."/>
            <person name="Jones P."/>
        </authorList>
    </citation>
    <scope>NUCLEOTIDE SEQUENCE [MRNA] (ISOFORM 3)</scope>
</reference>
<reference key="4">
    <citation type="journal article" date="1993" name="FEBS Lett.">
        <title>An alternatively spliced variant of mRNA for the human receptor for urokinase plasminogen activator.</title>
        <authorList>
            <person name="Pyke C."/>
            <person name="Eriksen J."/>
            <person name="Solberg H."/>
            <person name="Schnack Nielsen B."/>
            <person name="Kristensen P."/>
            <person name="Lund L.R."/>
            <person name="Danoe K."/>
        </authorList>
    </citation>
    <scope>NUCLEOTIDE SEQUENCE [MRNA] (ISOFORM 2)</scope>
</reference>
<reference key="5">
    <citation type="journal article" date="1994" name="Blood">
        <title>The structure of the urokinase-type plasminogen activator receptor gene.</title>
        <authorList>
            <person name="Casey J.R."/>
            <person name="Petranka J.G."/>
            <person name="Kottra J."/>
            <person name="Fleenor D.E."/>
            <person name="Rosse W.F."/>
        </authorList>
    </citation>
    <scope>NUCLEOTIDE SEQUENCE [GENOMIC DNA / MRNA] (ISOFORMS 1 AND 3)</scope>
    <source>
        <tissue>Placenta</tissue>
    </source>
</reference>
<reference key="6">
    <citation type="journal article" date="2004" name="Nat. Genet.">
        <title>Complete sequencing and characterization of 21,243 full-length human cDNAs.</title>
        <authorList>
            <person name="Ota T."/>
            <person name="Suzuki Y."/>
            <person name="Nishikawa T."/>
            <person name="Otsuki T."/>
            <person name="Sugiyama T."/>
            <person name="Irie R."/>
            <person name="Wakamatsu A."/>
            <person name="Hayashi K."/>
            <person name="Sato H."/>
            <person name="Nagai K."/>
            <person name="Kimura K."/>
            <person name="Makita H."/>
            <person name="Sekine M."/>
            <person name="Obayashi M."/>
            <person name="Nishi T."/>
            <person name="Shibahara T."/>
            <person name="Tanaka T."/>
            <person name="Ishii S."/>
            <person name="Yamamoto J."/>
            <person name="Saito K."/>
            <person name="Kawai Y."/>
            <person name="Isono Y."/>
            <person name="Nakamura Y."/>
            <person name="Nagahari K."/>
            <person name="Murakami K."/>
            <person name="Yasuda T."/>
            <person name="Iwayanagi T."/>
            <person name="Wagatsuma M."/>
            <person name="Shiratori A."/>
            <person name="Sudo H."/>
            <person name="Hosoiri T."/>
            <person name="Kaku Y."/>
            <person name="Kodaira H."/>
            <person name="Kondo H."/>
            <person name="Sugawara M."/>
            <person name="Takahashi M."/>
            <person name="Kanda K."/>
            <person name="Yokoi T."/>
            <person name="Furuya T."/>
            <person name="Kikkawa E."/>
            <person name="Omura Y."/>
            <person name="Abe K."/>
            <person name="Kamihara K."/>
            <person name="Katsuta N."/>
            <person name="Sato K."/>
            <person name="Tanikawa M."/>
            <person name="Yamazaki M."/>
            <person name="Ninomiya K."/>
            <person name="Ishibashi T."/>
            <person name="Yamashita H."/>
            <person name="Murakawa K."/>
            <person name="Fujimori K."/>
            <person name="Tanai H."/>
            <person name="Kimata M."/>
            <person name="Watanabe M."/>
            <person name="Hiraoka S."/>
            <person name="Chiba Y."/>
            <person name="Ishida S."/>
            <person name="Ono Y."/>
            <person name="Takiguchi S."/>
            <person name="Watanabe S."/>
            <person name="Yosida M."/>
            <person name="Hotuta T."/>
            <person name="Kusano J."/>
            <person name="Kanehori K."/>
            <person name="Takahashi-Fujii A."/>
            <person name="Hara H."/>
            <person name="Tanase T.-O."/>
            <person name="Nomura Y."/>
            <person name="Togiya S."/>
            <person name="Komai F."/>
            <person name="Hara R."/>
            <person name="Takeuchi K."/>
            <person name="Arita M."/>
            <person name="Imose N."/>
            <person name="Musashino K."/>
            <person name="Yuuki H."/>
            <person name="Oshima A."/>
            <person name="Sasaki N."/>
            <person name="Aotsuka S."/>
            <person name="Yoshikawa Y."/>
            <person name="Matsunawa H."/>
            <person name="Ichihara T."/>
            <person name="Shiohata N."/>
            <person name="Sano S."/>
            <person name="Moriya S."/>
            <person name="Momiyama H."/>
            <person name="Satoh N."/>
            <person name="Takami S."/>
            <person name="Terashima Y."/>
            <person name="Suzuki O."/>
            <person name="Nakagawa S."/>
            <person name="Senoh A."/>
            <person name="Mizoguchi H."/>
            <person name="Goto Y."/>
            <person name="Shimizu F."/>
            <person name="Wakebe H."/>
            <person name="Hishigaki H."/>
            <person name="Watanabe T."/>
            <person name="Sugiyama A."/>
            <person name="Takemoto M."/>
            <person name="Kawakami B."/>
            <person name="Yamazaki M."/>
            <person name="Watanabe K."/>
            <person name="Kumagai A."/>
            <person name="Itakura S."/>
            <person name="Fukuzumi Y."/>
            <person name="Fujimori Y."/>
            <person name="Komiyama M."/>
            <person name="Tashiro H."/>
            <person name="Tanigami A."/>
            <person name="Fujiwara T."/>
            <person name="Ono T."/>
            <person name="Yamada K."/>
            <person name="Fujii Y."/>
            <person name="Ozaki K."/>
            <person name="Hirao M."/>
            <person name="Ohmori Y."/>
            <person name="Kawabata A."/>
            <person name="Hikiji T."/>
            <person name="Kobatake N."/>
            <person name="Inagaki H."/>
            <person name="Ikema Y."/>
            <person name="Okamoto S."/>
            <person name="Okitani R."/>
            <person name="Kawakami T."/>
            <person name="Noguchi S."/>
            <person name="Itoh T."/>
            <person name="Shigeta K."/>
            <person name="Senba T."/>
            <person name="Matsumura K."/>
            <person name="Nakajima Y."/>
            <person name="Mizuno T."/>
            <person name="Morinaga M."/>
            <person name="Sasaki M."/>
            <person name="Togashi T."/>
            <person name="Oyama M."/>
            <person name="Hata H."/>
            <person name="Watanabe M."/>
            <person name="Komatsu T."/>
            <person name="Mizushima-Sugano J."/>
            <person name="Satoh T."/>
            <person name="Shirai Y."/>
            <person name="Takahashi Y."/>
            <person name="Nakagawa K."/>
            <person name="Okumura K."/>
            <person name="Nagase T."/>
            <person name="Nomura N."/>
            <person name="Kikuchi H."/>
            <person name="Masuho Y."/>
            <person name="Yamashita R."/>
            <person name="Nakai K."/>
            <person name="Yada T."/>
            <person name="Nakamura Y."/>
            <person name="Ohara O."/>
            <person name="Isogai T."/>
            <person name="Sugano S."/>
        </authorList>
    </citation>
    <scope>NUCLEOTIDE SEQUENCE [LARGE SCALE MRNA] (ISOFORM 1)</scope>
</reference>
<reference key="7">
    <citation type="submission" date="2004-06" db="EMBL/GenBank/DDBJ databases">
        <title>Cloning of human full open reading frames in Gateway(TM) system entry vector (pDONR201).</title>
        <authorList>
            <person name="Ebert L."/>
            <person name="Schick M."/>
            <person name="Neubert P."/>
            <person name="Schatten R."/>
            <person name="Henze S."/>
            <person name="Korn B."/>
        </authorList>
    </citation>
    <scope>NUCLEOTIDE SEQUENCE [LARGE SCALE MRNA] (ISOFORM 2)</scope>
</reference>
<reference key="8">
    <citation type="submission" date="2002-12" db="EMBL/GenBank/DDBJ databases">
        <authorList>
            <consortium name="SeattleSNPs variation discovery resource"/>
        </authorList>
    </citation>
    <scope>NUCLEOTIDE SEQUENCE [GENOMIC DNA]</scope>
    <scope>VARIANTS GLY-55; ALA-86; GLN-105; ARG-220; LYS-281 AND PRO-317</scope>
</reference>
<reference key="9">
    <citation type="journal article" date="2004" name="Nature">
        <title>The DNA sequence and biology of human chromosome 19.</title>
        <authorList>
            <person name="Grimwood J."/>
            <person name="Gordon L.A."/>
            <person name="Olsen A.S."/>
            <person name="Terry A."/>
            <person name="Schmutz J."/>
            <person name="Lamerdin J.E."/>
            <person name="Hellsten U."/>
            <person name="Goodstein D."/>
            <person name="Couronne O."/>
            <person name="Tran-Gyamfi M."/>
            <person name="Aerts A."/>
            <person name="Altherr M."/>
            <person name="Ashworth L."/>
            <person name="Bajorek E."/>
            <person name="Black S."/>
            <person name="Branscomb E."/>
            <person name="Caenepeel S."/>
            <person name="Carrano A.V."/>
            <person name="Caoile C."/>
            <person name="Chan Y.M."/>
            <person name="Christensen M."/>
            <person name="Cleland C.A."/>
            <person name="Copeland A."/>
            <person name="Dalin E."/>
            <person name="Dehal P."/>
            <person name="Denys M."/>
            <person name="Detter J.C."/>
            <person name="Escobar J."/>
            <person name="Flowers D."/>
            <person name="Fotopulos D."/>
            <person name="Garcia C."/>
            <person name="Georgescu A.M."/>
            <person name="Glavina T."/>
            <person name="Gomez M."/>
            <person name="Gonzales E."/>
            <person name="Groza M."/>
            <person name="Hammon N."/>
            <person name="Hawkins T."/>
            <person name="Haydu L."/>
            <person name="Ho I."/>
            <person name="Huang W."/>
            <person name="Israni S."/>
            <person name="Jett J."/>
            <person name="Kadner K."/>
            <person name="Kimball H."/>
            <person name="Kobayashi A."/>
            <person name="Larionov V."/>
            <person name="Leem S.-H."/>
            <person name="Lopez F."/>
            <person name="Lou Y."/>
            <person name="Lowry S."/>
            <person name="Malfatti S."/>
            <person name="Martinez D."/>
            <person name="McCready P.M."/>
            <person name="Medina C."/>
            <person name="Morgan J."/>
            <person name="Nelson K."/>
            <person name="Nolan M."/>
            <person name="Ovcharenko I."/>
            <person name="Pitluck S."/>
            <person name="Pollard M."/>
            <person name="Popkie A.P."/>
            <person name="Predki P."/>
            <person name="Quan G."/>
            <person name="Ramirez L."/>
            <person name="Rash S."/>
            <person name="Retterer J."/>
            <person name="Rodriguez A."/>
            <person name="Rogers S."/>
            <person name="Salamov A."/>
            <person name="Salazar A."/>
            <person name="She X."/>
            <person name="Smith D."/>
            <person name="Slezak T."/>
            <person name="Solovyev V."/>
            <person name="Thayer N."/>
            <person name="Tice H."/>
            <person name="Tsai M."/>
            <person name="Ustaszewska A."/>
            <person name="Vo N."/>
            <person name="Wagner M."/>
            <person name="Wheeler J."/>
            <person name="Wu K."/>
            <person name="Xie G."/>
            <person name="Yang J."/>
            <person name="Dubchak I."/>
            <person name="Furey T.S."/>
            <person name="DeJong P."/>
            <person name="Dickson M."/>
            <person name="Gordon D."/>
            <person name="Eichler E.E."/>
            <person name="Pennacchio L.A."/>
            <person name="Richardson P."/>
            <person name="Stubbs L."/>
            <person name="Rokhsar D.S."/>
            <person name="Myers R.M."/>
            <person name="Rubin E.M."/>
            <person name="Lucas S.M."/>
        </authorList>
    </citation>
    <scope>NUCLEOTIDE SEQUENCE [LARGE SCALE GENOMIC DNA]</scope>
</reference>
<reference key="10">
    <citation type="submission" date="2005-07" db="EMBL/GenBank/DDBJ databases">
        <authorList>
            <person name="Mural R.J."/>
            <person name="Istrail S."/>
            <person name="Sutton G.G."/>
            <person name="Florea L."/>
            <person name="Halpern A.L."/>
            <person name="Mobarry C.M."/>
            <person name="Lippert R."/>
            <person name="Walenz B."/>
            <person name="Shatkay H."/>
            <person name="Dew I."/>
            <person name="Miller J.R."/>
            <person name="Flanigan M.J."/>
            <person name="Edwards N.J."/>
            <person name="Bolanos R."/>
            <person name="Fasulo D."/>
            <person name="Halldorsson B.V."/>
            <person name="Hannenhalli S."/>
            <person name="Turner R."/>
            <person name="Yooseph S."/>
            <person name="Lu F."/>
            <person name="Nusskern D.R."/>
            <person name="Shue B.C."/>
            <person name="Zheng X.H."/>
            <person name="Zhong F."/>
            <person name="Delcher A.L."/>
            <person name="Huson D.H."/>
            <person name="Kravitz S.A."/>
            <person name="Mouchard L."/>
            <person name="Reinert K."/>
            <person name="Remington K.A."/>
            <person name="Clark A.G."/>
            <person name="Waterman M.S."/>
            <person name="Eichler E.E."/>
            <person name="Adams M.D."/>
            <person name="Hunkapiller M.W."/>
            <person name="Myers E.W."/>
            <person name="Venter J.C."/>
        </authorList>
    </citation>
    <scope>NUCLEOTIDE SEQUENCE [LARGE SCALE GENOMIC DNA]</scope>
</reference>
<reference key="11">
    <citation type="journal article" date="2004" name="Genome Res.">
        <title>The status, quality, and expansion of the NIH full-length cDNA project: the Mammalian Gene Collection (MGC).</title>
        <authorList>
            <consortium name="The MGC Project Team"/>
        </authorList>
    </citation>
    <scope>NUCLEOTIDE SEQUENCE [LARGE SCALE MRNA] (ISOFORM 1)</scope>
    <source>
        <tissue>Skin</tissue>
    </source>
</reference>
<reference key="12">
    <citation type="journal article" date="2000" name="Sheng Wu Gong Cheng Xue Bao">
        <title>cDNA cloning and sequencing of human urokinase receptor.</title>
        <authorList>
            <person name="Zhu F."/>
            <person name="Jia S."/>
            <person name="He F."/>
        </authorList>
    </citation>
    <scope>NUCLEOTIDE SEQUENCE [MRNA] OF 1-322 (ISOFORM 1)</scope>
    <source>
        <tissue>Lung cancer</tissue>
    </source>
</reference>
<reference key="13">
    <citation type="submission" date="2001-04" db="EMBL/GenBank/DDBJ databases">
        <title>Experimental study of anti-metastatic effect of soluble receptor for urokinase plasminogen activator on human breast cancer cells.</title>
        <authorList>
            <person name="Fu J."/>
            <person name="Bai X."/>
            <person name="Wang W."/>
            <person name="Xi X."/>
            <person name="Ruan C."/>
        </authorList>
    </citation>
    <scope>NUCLEOTIDE SEQUENCE [MRNA] OF 1-301 (ISOFORM 1)</scope>
</reference>
<reference key="14">
    <citation type="journal article" date="1995" name="Blood">
        <title>A conserved TATA-less proximal promoter drives basal transcription from the urokinase-type plasminogen activator receptor gene.</title>
        <authorList>
            <person name="Soravia E."/>
            <person name="Grebe A."/>
            <person name="De Luca P."/>
            <person name="Helin K."/>
            <person name="Suh T.T."/>
            <person name="Degen J.L."/>
            <person name="Blasi F."/>
        </authorList>
    </citation>
    <scope>NUCLEOTIDE SEQUENCE [GENOMIC DNA] OF 1-18</scope>
</reference>
<reference key="15">
    <citation type="journal article" date="1990" name="J. Biol. Chem.">
        <title>The human receptor for urokinase plasminogen activator. NH2-terminal amino acid sequence and glycosylation variants.</title>
        <authorList>
            <person name="Behrendt N."/>
            <person name="Roenne E."/>
            <person name="Ploug M."/>
            <person name="Petri T."/>
            <person name="Loeber D."/>
            <person name="Nielsen L.S."/>
            <person name="Schleuning W.-D."/>
            <person name="Blasi F."/>
            <person name="Appella E."/>
            <person name="Danoe K."/>
        </authorList>
    </citation>
    <scope>PARTIAL PROTEIN SEQUENCE</scope>
</reference>
<reference key="16">
    <citation type="journal article" date="1997" name="Eur. J. Biochem.">
        <title>Cell-surface acceleration of urokinase-catalyzed receptor cleavage.</title>
        <authorList>
            <person name="Hoeyer-Hansen G."/>
            <person name="Ploug M."/>
            <person name="Behrendt N."/>
            <person name="Roenne E."/>
            <person name="Danoe K."/>
        </authorList>
    </citation>
    <scope>PROTEIN SEQUENCE OF 106-116</scope>
    <scope>CLEAVAGE BY U-PA</scope>
</reference>
<reference key="17">
    <citation type="journal article" date="1995" name="J. Biol. Chem.">
        <title>A novel form of dipeptidylpeptidase IV found in human serum. Isolation, characterization, and comparison with T lymphocyte membrane dipeptidylpeptidase IV (CD26).</title>
        <authorList>
            <person name="Duke-Cohan J.S."/>
            <person name="Morimoto C."/>
            <person name="Rocker J.A."/>
            <person name="Schlossman S.F."/>
        </authorList>
    </citation>
    <scope>PROTEIN SEQUENCE OF 210-230 (ISOFORMS 1/2/3)</scope>
    <source>
        <tissue>Serum</tissue>
    </source>
</reference>
<reference key="18">
    <citation type="journal article" date="1993" name="J. Biol. Chem.">
        <title>Localization of the disulfide bonds in the NH2-terminal domain of the cellular receptor for human urokinase-type plasminogen activator. A domain structure belonging to a novel superfamily of glycolipid-anchored membrane proteins.</title>
        <authorList>
            <person name="Ploug M."/>
            <person name="Kjalke M."/>
            <person name="Roenne E."/>
            <person name="Weidle U."/>
            <person name="Hoeyer-Hansen G."/>
            <person name="Danoe K."/>
        </authorList>
    </citation>
    <scope>DISULFIDE BONDS</scope>
    <scope>PARTIAL PROTEIN SEQUENCE</scope>
</reference>
<reference key="19">
    <citation type="journal article" date="2000" name="J. Biol. Chem.">
        <title>A urokinase receptor-associated protein with specific collagen binding properties.</title>
        <authorList>
            <person name="Behrendt N."/>
            <person name="Jensen O.N."/>
            <person name="Engelholm L.H."/>
            <person name="Moertz E."/>
            <person name="Mann M."/>
            <person name="Danoe K."/>
        </authorList>
    </citation>
    <scope>INTERACTION WITH MRC2</scope>
</reference>
<reference key="20">
    <citation type="journal article" date="2002" name="Carcinogenesis">
        <title>Molecular proximity of seprase and the urokinase-type plasminogen activator receptor on malignant melanoma cell membranes: dependence on beta1 integrins and the cytoskeleton.</title>
        <authorList>
            <person name="Artym V.V."/>
            <person name="Kindzelskii A.L."/>
            <person name="Chen W.T."/>
            <person name="Petty H.R."/>
        </authorList>
    </citation>
    <scope>INTERACTION WITH FAP</scope>
    <scope>SUBCELLULAR LOCATION</scope>
</reference>
<reference key="21">
    <citation type="journal article" date="2004" name="Biochem. J.">
        <title>The mosaic receptor sorLA/LR11 binds components of the plasminogen-activating system and platelet-derived growth factor-BB similarly to LRP1 (low-density lipoprotein receptor-related protein), but mediates slow internalization of bound ligand.</title>
        <authorList>
            <person name="Gliemann J."/>
            <person name="Hermey G."/>
            <person name="Nykjaer A."/>
            <person name="Petersen C.M."/>
            <person name="Jacobsen C."/>
            <person name="Andreasen P.A."/>
        </authorList>
    </citation>
    <scope>INTERACTION WITH PLAU; SERPINE1 AND SORL1</scope>
</reference>
<reference key="22">
    <citation type="journal article" date="2004" name="Circ. Res.">
        <title>LR11, an LDL receptor gene family member, is a novel regulator of smooth muscle cell migration.</title>
        <authorList>
            <person name="Zhu Y."/>
            <person name="Bujo H."/>
            <person name="Yamazaki H."/>
            <person name="Ohwaki K."/>
            <person name="Jiang M."/>
            <person name="Hirayama S."/>
            <person name="Kanaki T."/>
            <person name="Shibasaki M."/>
            <person name="Takahashi K."/>
            <person name="Schneider W.J."/>
            <person name="Saito Y."/>
        </authorList>
    </citation>
    <scope>INTERACTION WITH LRP1 AND SORL1</scope>
</reference>
<reference key="23">
    <citation type="journal article" date="2005" name="J. Biol. Chem.">
        <title>Regulation of urokinase receptor proteolytic function by the tetraspanin CD82.</title>
        <authorList>
            <person name="Bass R."/>
            <person name="Werner F."/>
            <person name="Odintsova E."/>
            <person name="Sugiura T."/>
            <person name="Berditchevski F."/>
            <person name="Ellis V."/>
        </authorList>
    </citation>
    <scope>FUNCTION</scope>
    <scope>SUBCELLULAR LOCATION</scope>
    <scope>INTERACTION WITH PLAUR</scope>
</reference>
<reference key="24">
    <citation type="journal article" date="2008" name="Hum. Mol. Genet.">
        <title>Epileptic and developmental disorders of the speech cortex: ligand/receptor interaction of wild-type and mutant SRPX2 with the plasminogen activator receptor uPAR.</title>
        <authorList>
            <person name="Royer-Zemmour B."/>
            <person name="Ponsole-Lenfant M."/>
            <person name="Gara H."/>
            <person name="Roll P."/>
            <person name="Leveque C."/>
            <person name="Massacrier A."/>
            <person name="Ferracci G."/>
            <person name="Cillario J."/>
            <person name="Robaglia-Schlupp A."/>
            <person name="Vincentelli R."/>
            <person name="Cau P."/>
            <person name="Szepetowski P."/>
        </authorList>
    </citation>
    <scope>INTERACTION WITH SRPX2</scope>
</reference>
<reference key="25">
    <citation type="journal article" date="2013" name="J. Biol. Chem.">
        <title>The soluble form of LR11 protein is a regulator of hypoxia-induced, urokinase-type plasminogen activator receptor (uPAR)-mediated adhesion of immature hematological cells.</title>
        <authorList>
            <person name="Nishii K."/>
            <person name="Nakaseko C."/>
            <person name="Jiang M."/>
            <person name="Shimizu N."/>
            <person name="Takeuchi M."/>
            <person name="Schneider W.J."/>
            <person name="Bujo H."/>
        </authorList>
    </citation>
    <scope>INTERACTION WITH SORL1</scope>
</reference>
<reference key="26">
    <citation type="journal article" date="2005" name="EMBO J.">
        <title>Crystal structure of the human urokinase plasminogen activator receptor bound to an antagonist peptide.</title>
        <authorList>
            <person name="Llinas P."/>
            <person name="Le Du M.H."/>
            <person name="Gaardsvoll H."/>
            <person name="Danoe K."/>
            <person name="Ploug M."/>
            <person name="Gilquin B."/>
            <person name="Stura E.A."/>
            <person name="Menez A."/>
        </authorList>
    </citation>
    <scope>X-RAY CRYSTALLOGRAPHY (2.7 ANGSTROMS) OF 23-335 OF MUTANT GLN-222 IN COMPLEX WITH PEPTIDE ANTAGONIST</scope>
    <scope>GLYCOSYLATION AT ASN-74; ASN-184; ASN-194 AND ASN-255</scope>
    <scope>DISULFIDE BONDS</scope>
</reference>
<reference key="27">
    <citation type="journal article" date="2006" name="Science">
        <title>Structure of human urokinase plasminogen activator in complex with its receptor.</title>
        <authorList>
            <person name="Huai Q."/>
            <person name="Mazar A.P."/>
            <person name="Kuo A."/>
            <person name="Parry G.C."/>
            <person name="Shaw D.E."/>
            <person name="Callahan J."/>
            <person name="Li Y."/>
            <person name="Yuan C."/>
            <person name="Bian C."/>
            <person name="Chen L."/>
            <person name="Furie B."/>
            <person name="Furie B.C."/>
            <person name="Cines D.B."/>
            <person name="Huang M."/>
        </authorList>
    </citation>
    <scope>X-RAY CRYSTALLOGRAPHY (1.9 ANGSTROMS) OF 23-297 IN COMPLEX WITH PLAU</scope>
    <scope>GLYCOSYLATION AT ASN-74 AND ASN-194</scope>
    <scope>DISULFIDE BONDS</scope>
</reference>
<reference key="28">
    <citation type="journal article" date="2012" name="J. Mol. Biol.">
        <title>Crystal structure of the urokinase receptor in a ligand-free form.</title>
        <authorList>
            <person name="Xu X."/>
            <person name="Gardsvoll H."/>
            <person name="Yuan C."/>
            <person name="Lin L."/>
            <person name="Ploug M."/>
            <person name="Huang M."/>
        </authorList>
    </citation>
    <scope>X-RAY CRYSTALLOGRAPHY (2.39 ANGSTROMS) OF 23-305 OF MUTANT CYS-69 AND CYS-281 ALONE AND IN COMPLEX WITH PLAU</scope>
    <scope>DISULFIDE BONDS</scope>
    <scope>GLYCOSYLATION AT ASN-74 AND ASN-222</scope>
</reference>
<proteinExistence type="evidence at protein level"/>
<gene>
    <name type="primary">PLAUR</name>
    <name type="synonym">MO3</name>
    <name type="synonym">UPAR</name>
</gene>
<keyword id="KW-0002">3D-structure</keyword>
<keyword id="KW-0025">Alternative splicing</keyword>
<keyword id="KW-0965">Cell junction</keyword>
<keyword id="KW-1003">Cell membrane</keyword>
<keyword id="KW-0966">Cell projection</keyword>
<keyword id="KW-0903">Direct protein sequencing</keyword>
<keyword id="KW-1015">Disulfide bond</keyword>
<keyword id="KW-0325">Glycoprotein</keyword>
<keyword id="KW-0336">GPI-anchor</keyword>
<keyword id="KW-0449">Lipoprotein</keyword>
<keyword id="KW-0472">Membrane</keyword>
<keyword id="KW-1267">Proteomics identification</keyword>
<keyword id="KW-0675">Receptor</keyword>
<keyword id="KW-1185">Reference proteome</keyword>
<keyword id="KW-0677">Repeat</keyword>
<keyword id="KW-0964">Secreted</keyword>
<keyword id="KW-0732">Signal</keyword>
<accession>Q03405</accession>
<accession>A8K409</accession>
<accession>Q12876</accession>
<accession>Q15845</accession>
<accession>Q16887</accession>
<accession>Q6IB52</accession>
<accession>Q9BWT0</accession>
<accession>Q9NYC8</accession>
<accession>Q9UD69</accession>
<accession>Q9UEA6</accession>
<accession>Q9UM92</accession>
<accession>Q9UMV0</accession>